<organism>
    <name type="scientific">Caenorhabditis elegans</name>
    <dbReference type="NCBI Taxonomy" id="6239"/>
    <lineage>
        <taxon>Eukaryota</taxon>
        <taxon>Metazoa</taxon>
        <taxon>Ecdysozoa</taxon>
        <taxon>Nematoda</taxon>
        <taxon>Chromadorea</taxon>
        <taxon>Rhabditida</taxon>
        <taxon>Rhabditina</taxon>
        <taxon>Rhabditomorpha</taxon>
        <taxon>Rhabditoidea</taxon>
        <taxon>Rhabditidae</taxon>
        <taxon>Peloderinae</taxon>
        <taxon>Caenorhabditis</taxon>
    </lineage>
</organism>
<gene>
    <name type="ORF">Y57A10A.29</name>
</gene>
<accession>Q9NA72</accession>
<evidence type="ECO:0000255" key="1">
    <source>
        <dbReference type="HAMAP-Rule" id="MF_03057"/>
    </source>
</evidence>
<reference key="1">
    <citation type="journal article" date="1998" name="Science">
        <title>Genome sequence of the nematode C. elegans: a platform for investigating biology.</title>
        <authorList>
            <consortium name="The C. elegans sequencing consortium"/>
        </authorList>
    </citation>
    <scope>NUCLEOTIDE SEQUENCE [LARGE SCALE GENOMIC DNA]</scope>
    <source>
        <strain>Bristol N2</strain>
    </source>
</reference>
<comment type="function">
    <text evidence="1">Plays an essential role in the assembly of succinate dehydrogenase (SDH), an enzyme complex (also referred to as respiratory complex II) that is a component of both the tricarboxylic acid (TCA) cycle and the mitochondrial electron transport chain, and which couples the oxidation of succinate to fumarate with the reduction of ubiquinone (coenzyme Q) to ubiquinol. Required for flavinylation (covalent attachment of FAD) of the flavoprotein subunit of the SDH catalytic dimer.</text>
</comment>
<comment type="subunit">
    <text evidence="1">Interacts with the flavoprotein subunit within the SDH catalytic dimer.</text>
</comment>
<comment type="subcellular location">
    <subcellularLocation>
        <location evidence="1">Mitochondrion matrix</location>
    </subcellularLocation>
</comment>
<comment type="miscellaneous">
    <text evidence="1">This protein may be expected to contain an N-terminal transit peptide but none has been predicted.</text>
</comment>
<comment type="similarity">
    <text evidence="1">Belongs to the SDHAF2 family.</text>
</comment>
<proteinExistence type="inferred from homology"/>
<dbReference type="EMBL" id="AL117195">
    <property type="protein sequence ID" value="CAB55034.1"/>
    <property type="molecule type" value="Genomic_DNA"/>
</dbReference>
<dbReference type="PIR" id="T31651">
    <property type="entry name" value="T31651"/>
</dbReference>
<dbReference type="RefSeq" id="NP_496607.1">
    <property type="nucleotide sequence ID" value="NM_064206.8"/>
</dbReference>
<dbReference type="SMR" id="Q9NA72"/>
<dbReference type="BioGRID" id="40171">
    <property type="interactions" value="1"/>
</dbReference>
<dbReference type="FunCoup" id="Q9NA72">
    <property type="interactions" value="2471"/>
</dbReference>
<dbReference type="STRING" id="6239.Y57A10A.29.1"/>
<dbReference type="PaxDb" id="6239-Y57A10A.29.2"/>
<dbReference type="PeptideAtlas" id="Q9NA72"/>
<dbReference type="EnsemblMetazoa" id="Y57A10A.29.1">
    <property type="protein sequence ID" value="Y57A10A.29.1"/>
    <property type="gene ID" value="WBGene00013269"/>
</dbReference>
<dbReference type="GeneID" id="174870"/>
<dbReference type="KEGG" id="cel:CELE_Y57A10A.29"/>
<dbReference type="UCSC" id="Y57A10A.29">
    <property type="organism name" value="c. elegans"/>
</dbReference>
<dbReference type="AGR" id="WB:WBGene00013269"/>
<dbReference type="CTD" id="174870"/>
<dbReference type="WormBase" id="Y57A10A.29">
    <property type="protein sequence ID" value="CE22606"/>
    <property type="gene ID" value="WBGene00013269"/>
</dbReference>
<dbReference type="eggNOG" id="KOG3326">
    <property type="taxonomic scope" value="Eukaryota"/>
</dbReference>
<dbReference type="GeneTree" id="ENSGT00390000001149"/>
<dbReference type="HOGENOM" id="CLU_103054_1_0_1"/>
<dbReference type="InParanoid" id="Q9NA72"/>
<dbReference type="OMA" id="HMEWDLF"/>
<dbReference type="OrthoDB" id="284292at2759"/>
<dbReference type="PhylomeDB" id="Q9NA72"/>
<dbReference type="Reactome" id="R-CEL-9854311">
    <property type="pathway name" value="Maturation of TCA enzymes and regulation of TCA cycle"/>
</dbReference>
<dbReference type="PRO" id="PR:Q9NA72"/>
<dbReference type="Proteomes" id="UP000001940">
    <property type="component" value="Chromosome II"/>
</dbReference>
<dbReference type="Bgee" id="WBGene00013269">
    <property type="expression patterns" value="Expressed in adult organism and 4 other cell types or tissues"/>
</dbReference>
<dbReference type="GO" id="GO:0005759">
    <property type="term" value="C:mitochondrial matrix"/>
    <property type="evidence" value="ECO:0007669"/>
    <property type="project" value="UniProtKB-SubCell"/>
</dbReference>
<dbReference type="GO" id="GO:0005739">
    <property type="term" value="C:mitochondrion"/>
    <property type="evidence" value="ECO:0000318"/>
    <property type="project" value="GO_Central"/>
</dbReference>
<dbReference type="GO" id="GO:0006121">
    <property type="term" value="P:mitochondrial electron transport, succinate to ubiquinone"/>
    <property type="evidence" value="ECO:0000318"/>
    <property type="project" value="GO_Central"/>
</dbReference>
<dbReference type="GO" id="GO:0034553">
    <property type="term" value="P:mitochondrial respiratory chain complex II assembly"/>
    <property type="evidence" value="ECO:0000318"/>
    <property type="project" value="GO_Central"/>
</dbReference>
<dbReference type="GO" id="GO:0006099">
    <property type="term" value="P:tricarboxylic acid cycle"/>
    <property type="evidence" value="ECO:0000318"/>
    <property type="project" value="GO_Central"/>
</dbReference>
<dbReference type="FunFam" id="1.10.150.250:FF:000007">
    <property type="entry name" value="Succinate dehydrogenase assembly factor 2, mitochondrial"/>
    <property type="match status" value="1"/>
</dbReference>
<dbReference type="Gene3D" id="1.10.150.250">
    <property type="entry name" value="Flavinator of succinate dehydrogenase"/>
    <property type="match status" value="1"/>
</dbReference>
<dbReference type="HAMAP" id="MF_03057">
    <property type="entry name" value="SDHAF2"/>
    <property type="match status" value="1"/>
</dbReference>
<dbReference type="InterPro" id="IPR005631">
    <property type="entry name" value="SDH"/>
</dbReference>
<dbReference type="InterPro" id="IPR036714">
    <property type="entry name" value="SDH_sf"/>
</dbReference>
<dbReference type="InterPro" id="IPR028882">
    <property type="entry name" value="SDHAF2"/>
</dbReference>
<dbReference type="PANTHER" id="PTHR12469">
    <property type="entry name" value="PROTEIN EMI5 HOMOLOG, MITOCHONDRIAL"/>
    <property type="match status" value="1"/>
</dbReference>
<dbReference type="PANTHER" id="PTHR12469:SF2">
    <property type="entry name" value="SUCCINATE DEHYDROGENASE ASSEMBLY FACTOR 2, MITOCHONDRIAL"/>
    <property type="match status" value="1"/>
</dbReference>
<dbReference type="Pfam" id="PF03937">
    <property type="entry name" value="Sdh5"/>
    <property type="match status" value="1"/>
</dbReference>
<dbReference type="SUPFAM" id="SSF109910">
    <property type="entry name" value="YgfY-like"/>
    <property type="match status" value="1"/>
</dbReference>
<sequence length="119" mass="13946">MTSRILQRFFTVSTSLRSLTRAEVPGEKIDAKRARLLYQSKKRGILENDILLGDFAEQNLKKMSEPELKAYDKLINGEHMEWDLFYYLSNKKSPPEDVESCQVYQKVKKFVDDKRVPKS</sequence>
<name>SDHF2_CAEEL</name>
<keyword id="KW-0143">Chaperone</keyword>
<keyword id="KW-0496">Mitochondrion</keyword>
<keyword id="KW-1185">Reference proteome</keyword>
<protein>
    <recommendedName>
        <fullName evidence="1">Succinate dehydrogenase assembly factor 2, mitochondrial</fullName>
        <shortName evidence="1">SDH assembly factor 2</shortName>
        <shortName evidence="1">SDHAF2</shortName>
    </recommendedName>
</protein>
<feature type="chain" id="PRO_0000383185" description="Succinate dehydrogenase assembly factor 2, mitochondrial">
    <location>
        <begin position="1"/>
        <end position="119"/>
    </location>
</feature>